<accession>P0DOH5</accession>
<name>GGAG_MLVFF</name>
<keyword id="KW-0024">Alternative initiation</keyword>
<keyword id="KW-0175">Coiled coil</keyword>
<keyword id="KW-0325">Glycoprotein</keyword>
<keyword id="KW-1032">Host cell membrane</keyword>
<keyword id="KW-1043">Host membrane</keyword>
<keyword id="KW-0472">Membrane</keyword>
<keyword id="KW-0479">Metal-binding</keyword>
<keyword id="KW-0812">Transmembrane</keyword>
<keyword id="KW-1133">Transmembrane helix</keyword>
<keyword id="KW-0862">Zinc</keyword>
<keyword id="KW-0863">Zinc-finger</keyword>
<feature type="chain" id="PRO_0000441139" description="Glyco-Gag protein">
    <location>
        <begin position="1"/>
        <end position="626"/>
    </location>
</feature>
<feature type="topological domain" description="Cytoplasmic" evidence="6">
    <location>
        <begin position="1"/>
        <end position="66"/>
    </location>
</feature>
<feature type="transmembrane region" description="Helical" evidence="2">
    <location>
        <begin position="67"/>
        <end position="86"/>
    </location>
</feature>
<feature type="topological domain" description="Extracellular" evidence="6">
    <location>
        <begin position="87"/>
        <end position="626"/>
    </location>
</feature>
<feature type="zinc finger region" description="CCHC-type" evidence="3">
    <location>
        <begin position="590"/>
        <end position="607"/>
    </location>
</feature>
<feature type="region of interest" description="Disordered" evidence="5">
    <location>
        <begin position="198"/>
        <end position="306"/>
    </location>
</feature>
<feature type="region of interest" description="Disordered" evidence="5">
    <location>
        <begin position="522"/>
        <end position="626"/>
    </location>
</feature>
<feature type="coiled-coil region" evidence="2">
    <location>
        <begin position="526"/>
        <end position="566"/>
    </location>
</feature>
<feature type="compositionally biased region" description="Pro residues" evidence="5">
    <location>
        <begin position="198"/>
        <end position="212"/>
    </location>
</feature>
<feature type="compositionally biased region" description="Pro residues" evidence="5">
    <location>
        <begin position="249"/>
        <end position="261"/>
    </location>
</feature>
<feature type="compositionally biased region" description="Basic and acidic residues" evidence="5">
    <location>
        <begin position="522"/>
        <end position="554"/>
    </location>
</feature>
<feature type="compositionally biased region" description="Basic and acidic residues" evidence="5">
    <location>
        <begin position="574"/>
        <end position="607"/>
    </location>
</feature>
<feature type="glycosylation site" description="N-linked (GlcNAc...) asparagine; by host" evidence="4">
    <location>
        <position position="113"/>
    </location>
</feature>
<protein>
    <recommendedName>
        <fullName>Glyco-Gag protein</fullName>
    </recommendedName>
    <alternativeName>
        <fullName>Gross cell surface antigen</fullName>
    </alternativeName>
    <alternativeName>
        <fullName>glycosylated Pr80 gag</fullName>
        <shortName>gPr80 Gag</shortName>
        <shortName>gag-gPr80</shortName>
    </alternativeName>
</protein>
<proteinExistence type="inferred from homology"/>
<sequence>LGDVPGTSGAIFVARPESNHPDRFGLFGAPPLEEGYVVLVGDRGLKRFPPPSEFLLSVWNRSRAARLVCCSIVLCCLCLTVFLYLSENMGQAVTTPLSLTLDHWKDVERTAHNLSVEVRKRRWVTFCSAEWPTFNVGWPRDGTFNPDIITQVKIKVFSPGPHGHPDQVPYIVTWEAIAVDPPPWVRPFVHPKPPLSLPPSAPSLPPEPPLSTPPQSSLYPALTSPLNTKPRPQVLPDSGGPLIDLLTEDPPPYRDPGPPSPDGNGDSGEVAPTEGAPDPSPMVSRLRGRKEPPVADSTTSQAFPLRLGGNGQYQYWPFSSSDLYNWKNNNPSFSEDPAKLTALIESVLLTHQPTWDDCQQLLGTLLTGEEKQRVLLEARKAVRGEDGRPTQLPNDINDAFPLERPDWDYNTQRGRNHLVHYRQLLLAGLQNAGRSPTNLAKVKGITQGPNESPSAFLERLKEAYRRYTPYDPEDPGQETNVAMSFIWQSAPDIGRKLERLEDLKSKTLGDLVREAEKIFNKRETPEEREERIRRETEEKEERRRAEDVQREKERDRRRHREMSKLLATVVSGQRQDRQGGERRRPQLDHDQCAYCKEKGHWARDCPKKPRGPRGPRPQASLLTLDD</sequence>
<reference key="1">
    <citation type="journal article" date="1991" name="Nucleic Acids Res.">
        <title>Complete nucleotide sequence of Friend murine leukemia virus, strain FB29.</title>
        <authorList>
            <person name="Perryman S."/>
            <person name="Nishio J."/>
            <person name="Chesebro B."/>
        </authorList>
    </citation>
    <scope>NUCLEOTIDE SEQUENCE [GENOMIC DNA]</scope>
</reference>
<organismHost>
    <name type="scientific">Mus musculus</name>
    <name type="common">Mouse</name>
    <dbReference type="NCBI Taxonomy" id="10090"/>
</organismHost>
<dbReference type="EMBL" id="Z11128">
    <property type="status" value="NOT_ANNOTATED_CDS"/>
    <property type="molecule type" value="Genomic_DNA"/>
</dbReference>
<dbReference type="SMR" id="P0DOH5"/>
<dbReference type="Proteomes" id="UP000008877">
    <property type="component" value="Segment"/>
</dbReference>
<dbReference type="GO" id="GO:0020002">
    <property type="term" value="C:host cell plasma membrane"/>
    <property type="evidence" value="ECO:0007669"/>
    <property type="project" value="UniProtKB-SubCell"/>
</dbReference>
<dbReference type="GO" id="GO:0016020">
    <property type="term" value="C:membrane"/>
    <property type="evidence" value="ECO:0007669"/>
    <property type="project" value="UniProtKB-KW"/>
</dbReference>
<dbReference type="GO" id="GO:0003676">
    <property type="term" value="F:nucleic acid binding"/>
    <property type="evidence" value="ECO:0007669"/>
    <property type="project" value="InterPro"/>
</dbReference>
<dbReference type="GO" id="GO:0008270">
    <property type="term" value="F:zinc ion binding"/>
    <property type="evidence" value="ECO:0007669"/>
    <property type="project" value="UniProtKB-KW"/>
</dbReference>
<dbReference type="GO" id="GO:0019068">
    <property type="term" value="P:virion assembly"/>
    <property type="evidence" value="ECO:0007669"/>
    <property type="project" value="InterPro"/>
</dbReference>
<dbReference type="Gene3D" id="1.10.150.180">
    <property type="entry name" value="Gamma-retroviral matrix domain"/>
    <property type="match status" value="1"/>
</dbReference>
<dbReference type="Gene3D" id="1.10.375.10">
    <property type="entry name" value="Human Immunodeficiency Virus Type 1 Capsid Protein"/>
    <property type="match status" value="1"/>
</dbReference>
<dbReference type="Gene3D" id="4.10.60.10">
    <property type="entry name" value="Zinc finger, CCHC-type"/>
    <property type="match status" value="1"/>
</dbReference>
<dbReference type="InterPro" id="IPR000840">
    <property type="entry name" value="G_retro_matrix"/>
</dbReference>
<dbReference type="InterPro" id="IPR036946">
    <property type="entry name" value="G_retro_matrix_sf"/>
</dbReference>
<dbReference type="InterPro" id="IPR002079">
    <property type="entry name" value="Gag_p12"/>
</dbReference>
<dbReference type="InterPro" id="IPR003036">
    <property type="entry name" value="Gag_P30"/>
</dbReference>
<dbReference type="InterPro" id="IPR008919">
    <property type="entry name" value="Retrov_capsid_N"/>
</dbReference>
<dbReference type="InterPro" id="IPR050462">
    <property type="entry name" value="Retroviral_Gag-Pol_poly"/>
</dbReference>
<dbReference type="InterPro" id="IPR010999">
    <property type="entry name" value="Retrovr_matrix"/>
</dbReference>
<dbReference type="InterPro" id="IPR001878">
    <property type="entry name" value="Znf_CCHC"/>
</dbReference>
<dbReference type="InterPro" id="IPR036875">
    <property type="entry name" value="Znf_CCHC_sf"/>
</dbReference>
<dbReference type="PANTHER" id="PTHR33166">
    <property type="entry name" value="GAG_P30 DOMAIN-CONTAINING PROTEIN"/>
    <property type="match status" value="1"/>
</dbReference>
<dbReference type="Pfam" id="PF01140">
    <property type="entry name" value="Gag_MA"/>
    <property type="match status" value="1"/>
</dbReference>
<dbReference type="Pfam" id="PF01141">
    <property type="entry name" value="Gag_p12"/>
    <property type="match status" value="1"/>
</dbReference>
<dbReference type="Pfam" id="PF02093">
    <property type="entry name" value="Gag_p30"/>
    <property type="match status" value="1"/>
</dbReference>
<dbReference type="Pfam" id="PF00098">
    <property type="entry name" value="zf-CCHC"/>
    <property type="match status" value="1"/>
</dbReference>
<dbReference type="SMART" id="SM00343">
    <property type="entry name" value="ZnF_C2HC"/>
    <property type="match status" value="1"/>
</dbReference>
<dbReference type="SUPFAM" id="SSF47836">
    <property type="entry name" value="Retroviral matrix proteins"/>
    <property type="match status" value="1"/>
</dbReference>
<dbReference type="SUPFAM" id="SSF47943">
    <property type="entry name" value="Retrovirus capsid protein, N-terminal core domain"/>
    <property type="match status" value="1"/>
</dbReference>
<dbReference type="SUPFAM" id="SSF57756">
    <property type="entry name" value="Retrovirus zinc finger-like domains"/>
    <property type="match status" value="1"/>
</dbReference>
<dbReference type="PROSITE" id="PS50158">
    <property type="entry name" value="ZF_CCHC"/>
    <property type="match status" value="1"/>
</dbReference>
<comment type="function">
    <text evidence="1">Plays a role in viral particle release. Presumably acts by facilitating the fission of the virion bud at the cell surface. May prevent the antiviral activity of murine APOBEC3.</text>
</comment>
<comment type="subcellular location">
    <subcellularLocation>
        <location evidence="1 2">Host cell membrane</location>
        <topology evidence="1">Single-pass membrane protein</topology>
    </subcellularLocation>
</comment>
<comment type="alternative products">
    <event type="alternative initiation"/>
    <isoform>
        <id>P0DOH5-1</id>
        <name>Glyco-Gag protein</name>
        <sequence type="displayed"/>
    </isoform>
    <isoform>
        <id>P26806-1</id>
        <name>Gag polyprotein</name>
        <sequence type="external"/>
    </isoform>
</comment>
<comment type="PTM">
    <text evidence="1">Glycosylated by host.</text>
</comment>
<comment type="PTM">
    <text evidence="1">Cleaved by host near the middle of the molecule, releasing the c-terminal half containing capsid and nucleoprotein domains op GAG.</text>
</comment>
<organism>
    <name type="scientific">Friend murine leukemia virus (isolate FB29)</name>
    <name type="common">FrMLV</name>
    <dbReference type="NCBI Taxonomy" id="11797"/>
    <lineage>
        <taxon>Viruses</taxon>
        <taxon>Riboviria</taxon>
        <taxon>Pararnavirae</taxon>
        <taxon>Artverviricota</taxon>
        <taxon>Revtraviricetes</taxon>
        <taxon>Ortervirales</taxon>
        <taxon>Retroviridae</taxon>
        <taxon>Orthoretrovirinae</taxon>
        <taxon>Gammaretrovirus</taxon>
        <taxon>Murine leukemia virus</taxon>
    </lineage>
</organism>
<evidence type="ECO:0000250" key="1">
    <source>
        <dbReference type="UniProtKB" id="P0DOG8"/>
    </source>
</evidence>
<evidence type="ECO:0000255" key="2"/>
<evidence type="ECO:0000255" key="3">
    <source>
        <dbReference type="PROSITE-ProRule" id="PRU00047"/>
    </source>
</evidence>
<evidence type="ECO:0000255" key="4">
    <source>
        <dbReference type="PROSITE-ProRule" id="PRU00498"/>
    </source>
</evidence>
<evidence type="ECO:0000256" key="5">
    <source>
        <dbReference type="SAM" id="MobiDB-lite"/>
    </source>
</evidence>
<evidence type="ECO:0000305" key="6"/>